<organism evidence="3">
    <name type="scientific">Xenopus boumbaensis</name>
    <name type="common">Mawa clawed frog</name>
    <dbReference type="NCBI Taxonomy" id="288550"/>
    <lineage>
        <taxon>Eukaryota</taxon>
        <taxon>Metazoa</taxon>
        <taxon>Chordata</taxon>
        <taxon>Craniata</taxon>
        <taxon>Vertebrata</taxon>
        <taxon>Euteleostomi</taxon>
        <taxon>Amphibia</taxon>
        <taxon>Batrachia</taxon>
        <taxon>Anura</taxon>
        <taxon>Pipoidea</taxon>
        <taxon>Pipidae</taxon>
        <taxon>Xenopodinae</taxon>
        <taxon>Xenopus</taxon>
        <taxon>Xenopus</taxon>
    </lineage>
</organism>
<protein>
    <recommendedName>
        <fullName evidence="3">Caerulein precursor fragment BM2</fullName>
    </recommendedName>
    <alternativeName>
        <fullName evidence="3">CPF-BM2</fullName>
    </alternativeName>
</protein>
<accession>C0HKK9</accession>
<sequence length="23" mass="2251">GLGSVLGKILKMGVNLLGGAPKQ</sequence>
<feature type="peptide" id="PRO_0000440785" description="Caerulein precursor fragment BM2" evidence="2">
    <location>
        <begin position="1"/>
        <end position="23"/>
    </location>
</feature>
<comment type="function">
    <text evidence="1">Antimicrobial peptide.</text>
</comment>
<comment type="subcellular location">
    <subcellularLocation>
        <location evidence="2">Secreted</location>
    </subcellularLocation>
</comment>
<comment type="tissue specificity">
    <text evidence="5">Expressed by the skin glands.</text>
</comment>
<comment type="mass spectrometry" mass="2250.5" method="MALDI" evidence="2"/>
<comment type="similarity">
    <text evidence="4">Belongs to the gastrin/cholecystokinin family.</text>
</comment>
<reference evidence="4" key="1">
    <citation type="journal article" date="2015" name="Peptides">
        <title>Host-defense and trefoil factor family peptides in skin secretions of the Mawa clawed frog Xenopus boumbaensis (Pipidae).</title>
        <authorList>
            <person name="Conlon J.M."/>
            <person name="Mechkarska M."/>
            <person name="Kolodziejek J."/>
            <person name="Leprince J."/>
            <person name="Coquet L."/>
            <person name="Jouenne T."/>
            <person name="Vaudry H."/>
            <person name="Nowotny N."/>
            <person name="King J.D."/>
        </authorList>
    </citation>
    <scope>PROTEIN SEQUENCE</scope>
    <scope>SUBCELLULAR LOCATION</scope>
    <scope>MASS SPECTROMETRY</scope>
    <source>
        <tissue evidence="3">Skin secretion</tissue>
    </source>
</reference>
<proteinExistence type="evidence at protein level"/>
<keyword id="KW-0878">Amphibian defense peptide</keyword>
<keyword id="KW-0929">Antimicrobial</keyword>
<keyword id="KW-0903">Direct protein sequencing</keyword>
<keyword id="KW-0964">Secreted</keyword>
<name>CFBM2_XENBM</name>
<evidence type="ECO:0000250" key="1">
    <source>
        <dbReference type="UniProtKB" id="C0HK89"/>
    </source>
</evidence>
<evidence type="ECO:0000269" key="2">
    <source>
    </source>
</evidence>
<evidence type="ECO:0000303" key="3">
    <source>
    </source>
</evidence>
<evidence type="ECO:0000305" key="4"/>
<evidence type="ECO:0000305" key="5">
    <source>
    </source>
</evidence>
<dbReference type="GO" id="GO:0005576">
    <property type="term" value="C:extracellular region"/>
    <property type="evidence" value="ECO:0007669"/>
    <property type="project" value="UniProtKB-SubCell"/>
</dbReference>
<dbReference type="GO" id="GO:0006952">
    <property type="term" value="P:defense response"/>
    <property type="evidence" value="ECO:0007669"/>
    <property type="project" value="UniProtKB-KW"/>
</dbReference>